<reference key="1">
    <citation type="submission" date="2001-01" db="EMBL/GenBank/DDBJ databases">
        <title>Identification of FKSG44, a novel gene located on human chromosome 11q13.</title>
        <authorList>
            <person name="Wang Y.-G."/>
            <person name="Gong L."/>
        </authorList>
    </citation>
    <scope>NUCLEOTIDE SEQUENCE [MRNA] (ISOFORM 1)</scope>
</reference>
<reference key="2">
    <citation type="journal article" date="2004" name="Nat. Genet.">
        <title>Complete sequencing and characterization of 21,243 full-length human cDNAs.</title>
        <authorList>
            <person name="Ota T."/>
            <person name="Suzuki Y."/>
            <person name="Nishikawa T."/>
            <person name="Otsuki T."/>
            <person name="Sugiyama T."/>
            <person name="Irie R."/>
            <person name="Wakamatsu A."/>
            <person name="Hayashi K."/>
            <person name="Sato H."/>
            <person name="Nagai K."/>
            <person name="Kimura K."/>
            <person name="Makita H."/>
            <person name="Sekine M."/>
            <person name="Obayashi M."/>
            <person name="Nishi T."/>
            <person name="Shibahara T."/>
            <person name="Tanaka T."/>
            <person name="Ishii S."/>
            <person name="Yamamoto J."/>
            <person name="Saito K."/>
            <person name="Kawai Y."/>
            <person name="Isono Y."/>
            <person name="Nakamura Y."/>
            <person name="Nagahari K."/>
            <person name="Murakami K."/>
            <person name="Yasuda T."/>
            <person name="Iwayanagi T."/>
            <person name="Wagatsuma M."/>
            <person name="Shiratori A."/>
            <person name="Sudo H."/>
            <person name="Hosoiri T."/>
            <person name="Kaku Y."/>
            <person name="Kodaira H."/>
            <person name="Kondo H."/>
            <person name="Sugawara M."/>
            <person name="Takahashi M."/>
            <person name="Kanda K."/>
            <person name="Yokoi T."/>
            <person name="Furuya T."/>
            <person name="Kikkawa E."/>
            <person name="Omura Y."/>
            <person name="Abe K."/>
            <person name="Kamihara K."/>
            <person name="Katsuta N."/>
            <person name="Sato K."/>
            <person name="Tanikawa M."/>
            <person name="Yamazaki M."/>
            <person name="Ninomiya K."/>
            <person name="Ishibashi T."/>
            <person name="Yamashita H."/>
            <person name="Murakawa K."/>
            <person name="Fujimori K."/>
            <person name="Tanai H."/>
            <person name="Kimata M."/>
            <person name="Watanabe M."/>
            <person name="Hiraoka S."/>
            <person name="Chiba Y."/>
            <person name="Ishida S."/>
            <person name="Ono Y."/>
            <person name="Takiguchi S."/>
            <person name="Watanabe S."/>
            <person name="Yosida M."/>
            <person name="Hotuta T."/>
            <person name="Kusano J."/>
            <person name="Kanehori K."/>
            <person name="Takahashi-Fujii A."/>
            <person name="Hara H."/>
            <person name="Tanase T.-O."/>
            <person name="Nomura Y."/>
            <person name="Togiya S."/>
            <person name="Komai F."/>
            <person name="Hara R."/>
            <person name="Takeuchi K."/>
            <person name="Arita M."/>
            <person name="Imose N."/>
            <person name="Musashino K."/>
            <person name="Yuuki H."/>
            <person name="Oshima A."/>
            <person name="Sasaki N."/>
            <person name="Aotsuka S."/>
            <person name="Yoshikawa Y."/>
            <person name="Matsunawa H."/>
            <person name="Ichihara T."/>
            <person name="Shiohata N."/>
            <person name="Sano S."/>
            <person name="Moriya S."/>
            <person name="Momiyama H."/>
            <person name="Satoh N."/>
            <person name="Takami S."/>
            <person name="Terashima Y."/>
            <person name="Suzuki O."/>
            <person name="Nakagawa S."/>
            <person name="Senoh A."/>
            <person name="Mizoguchi H."/>
            <person name="Goto Y."/>
            <person name="Shimizu F."/>
            <person name="Wakebe H."/>
            <person name="Hishigaki H."/>
            <person name="Watanabe T."/>
            <person name="Sugiyama A."/>
            <person name="Takemoto M."/>
            <person name="Kawakami B."/>
            <person name="Yamazaki M."/>
            <person name="Watanabe K."/>
            <person name="Kumagai A."/>
            <person name="Itakura S."/>
            <person name="Fukuzumi Y."/>
            <person name="Fujimori Y."/>
            <person name="Komiyama M."/>
            <person name="Tashiro H."/>
            <person name="Tanigami A."/>
            <person name="Fujiwara T."/>
            <person name="Ono T."/>
            <person name="Yamada K."/>
            <person name="Fujii Y."/>
            <person name="Ozaki K."/>
            <person name="Hirao M."/>
            <person name="Ohmori Y."/>
            <person name="Kawabata A."/>
            <person name="Hikiji T."/>
            <person name="Kobatake N."/>
            <person name="Inagaki H."/>
            <person name="Ikema Y."/>
            <person name="Okamoto S."/>
            <person name="Okitani R."/>
            <person name="Kawakami T."/>
            <person name="Noguchi S."/>
            <person name="Itoh T."/>
            <person name="Shigeta K."/>
            <person name="Senba T."/>
            <person name="Matsumura K."/>
            <person name="Nakajima Y."/>
            <person name="Mizuno T."/>
            <person name="Morinaga M."/>
            <person name="Sasaki M."/>
            <person name="Togashi T."/>
            <person name="Oyama M."/>
            <person name="Hata H."/>
            <person name="Watanabe M."/>
            <person name="Komatsu T."/>
            <person name="Mizushima-Sugano J."/>
            <person name="Satoh T."/>
            <person name="Shirai Y."/>
            <person name="Takahashi Y."/>
            <person name="Nakagawa K."/>
            <person name="Okumura K."/>
            <person name="Nagase T."/>
            <person name="Nomura N."/>
            <person name="Kikuchi H."/>
            <person name="Masuho Y."/>
            <person name="Yamashita R."/>
            <person name="Nakai K."/>
            <person name="Yada T."/>
            <person name="Nakamura Y."/>
            <person name="Ohara O."/>
            <person name="Isogai T."/>
            <person name="Sugano S."/>
        </authorList>
    </citation>
    <scope>NUCLEOTIDE SEQUENCE [LARGE SCALE MRNA] (ISOFORMS 2 AND 3)</scope>
    <source>
        <tissue>Trachea</tissue>
    </source>
</reference>
<reference key="3">
    <citation type="journal article" date="2006" name="Nature">
        <title>Human chromosome 11 DNA sequence and analysis including novel gene identification.</title>
        <authorList>
            <person name="Taylor T.D."/>
            <person name="Noguchi H."/>
            <person name="Totoki Y."/>
            <person name="Toyoda A."/>
            <person name="Kuroki Y."/>
            <person name="Dewar K."/>
            <person name="Lloyd C."/>
            <person name="Itoh T."/>
            <person name="Takeda T."/>
            <person name="Kim D.-W."/>
            <person name="She X."/>
            <person name="Barlow K.F."/>
            <person name="Bloom T."/>
            <person name="Bruford E."/>
            <person name="Chang J.L."/>
            <person name="Cuomo C.A."/>
            <person name="Eichler E."/>
            <person name="FitzGerald M.G."/>
            <person name="Jaffe D.B."/>
            <person name="LaButti K."/>
            <person name="Nicol R."/>
            <person name="Park H.-S."/>
            <person name="Seaman C."/>
            <person name="Sougnez C."/>
            <person name="Yang X."/>
            <person name="Zimmer A.R."/>
            <person name="Zody M.C."/>
            <person name="Birren B.W."/>
            <person name="Nusbaum C."/>
            <person name="Fujiyama A."/>
            <person name="Hattori M."/>
            <person name="Rogers J."/>
            <person name="Lander E.S."/>
            <person name="Sakaki Y."/>
        </authorList>
    </citation>
    <scope>NUCLEOTIDE SEQUENCE [LARGE SCALE GENOMIC DNA]</scope>
</reference>
<reference key="4">
    <citation type="journal article" date="2004" name="Genome Res.">
        <title>The status, quality, and expansion of the NIH full-length cDNA project: the Mammalian Gene Collection (MGC).</title>
        <authorList>
            <consortium name="The MGC Project Team"/>
        </authorList>
    </citation>
    <scope>NUCLEOTIDE SEQUENCE [LARGE SCALE MRNA] (ISOFORM 1)</scope>
    <source>
        <tissue>Colon</tissue>
        <tissue>Testis</tissue>
    </source>
</reference>
<reference key="5">
    <citation type="journal article" date="2008" name="Proc. Natl. Acad. Sci. U.S.A.">
        <title>A quantitative atlas of mitotic phosphorylation.</title>
        <authorList>
            <person name="Dephoure N."/>
            <person name="Zhou C."/>
            <person name="Villen J."/>
            <person name="Beausoleil S.A."/>
            <person name="Bakalarski C.E."/>
            <person name="Elledge S.J."/>
            <person name="Gygi S.P."/>
        </authorList>
    </citation>
    <scope>PHOSPHORYLATION [LARGE SCALE ANALYSIS] AT SER-439</scope>
    <scope>IDENTIFICATION BY MASS SPECTROMETRY [LARGE SCALE ANALYSIS]</scope>
    <source>
        <tissue>Cervix carcinoma</tissue>
    </source>
</reference>
<reference key="6">
    <citation type="journal article" date="2009" name="PLoS ONE">
        <title>Bili inhibits Wnt/beta-catenin signaling by regulating the recruitment of axin to LRP6.</title>
        <authorList>
            <person name="Kategaya L.S."/>
            <person name="Changkakoty B."/>
            <person name="Biechele T."/>
            <person name="Conrad W.H."/>
            <person name="Kaykas A."/>
            <person name="Dasgupta R."/>
            <person name="Moon R.T."/>
        </authorList>
    </citation>
    <scope>FUNCTION</scope>
    <scope>INTERACTION WITH LRP6</scope>
    <scope>SUBCELLULAR LOCATION</scope>
    <scope>TISSUE SPECIFICITY</scope>
</reference>
<reference key="7">
    <citation type="journal article" date="2010" name="Sci. Signal.">
        <title>Quantitative phosphoproteomics reveals widespread full phosphorylation site occupancy during mitosis.</title>
        <authorList>
            <person name="Olsen J.V."/>
            <person name="Vermeulen M."/>
            <person name="Santamaria A."/>
            <person name="Kumar C."/>
            <person name="Miller M.L."/>
            <person name="Jensen L.J."/>
            <person name="Gnad F."/>
            <person name="Cox J."/>
            <person name="Jensen T.S."/>
            <person name="Nigg E.A."/>
            <person name="Brunak S."/>
            <person name="Mann M."/>
        </authorList>
    </citation>
    <scope>PHOSPHORYLATION [LARGE SCALE ANALYSIS] AT SER-446</scope>
    <scope>IDENTIFICATION BY MASS SPECTROMETRY [LARGE SCALE ANALYSIS]</scope>
    <source>
        <tissue>Cervix carcinoma</tissue>
    </source>
</reference>
<reference key="8">
    <citation type="journal article" date="2012" name="Proc. Natl. Acad. Sci. U.S.A.">
        <title>N-terminal acetylome analyses and functional insights of the N-terminal acetyltransferase NatB.</title>
        <authorList>
            <person name="Van Damme P."/>
            <person name="Lasa M."/>
            <person name="Polevoda B."/>
            <person name="Gazquez C."/>
            <person name="Elosegui-Artola A."/>
            <person name="Kim D.S."/>
            <person name="De Juan-Pardo E."/>
            <person name="Demeyer K."/>
            <person name="Hole K."/>
            <person name="Larrea E."/>
            <person name="Timmerman E."/>
            <person name="Prieto J."/>
            <person name="Arnesen T."/>
            <person name="Sherman F."/>
            <person name="Gevaert K."/>
            <person name="Aldabe R."/>
        </authorList>
    </citation>
    <scope>ACETYLATION [LARGE SCALE ANALYSIS] AT MET-1</scope>
    <scope>IDENTIFICATION BY MASS SPECTROMETRY [LARGE SCALE ANALYSIS]</scope>
</reference>
<reference key="9">
    <citation type="journal article" date="2013" name="J. Proteome Res.">
        <title>Toward a comprehensive characterization of a human cancer cell phosphoproteome.</title>
        <authorList>
            <person name="Zhou H."/>
            <person name="Di Palma S."/>
            <person name="Preisinger C."/>
            <person name="Peng M."/>
            <person name="Polat A.N."/>
            <person name="Heck A.J."/>
            <person name="Mohammed S."/>
        </authorList>
    </citation>
    <scope>PHOSPHORYLATION [LARGE SCALE ANALYSIS] AT SER-439 AND SER-446</scope>
    <scope>IDENTIFICATION BY MASS SPECTROMETRY [LARGE SCALE ANALYSIS]</scope>
    <source>
        <tissue>Cervix carcinoma</tissue>
        <tissue>Erythroleukemia</tissue>
    </source>
</reference>
<reference key="10">
    <citation type="journal article" date="2014" name="J. Proteomics">
        <title>An enzyme assisted RP-RPLC approach for in-depth analysis of human liver phosphoproteome.</title>
        <authorList>
            <person name="Bian Y."/>
            <person name="Song C."/>
            <person name="Cheng K."/>
            <person name="Dong M."/>
            <person name="Wang F."/>
            <person name="Huang J."/>
            <person name="Sun D."/>
            <person name="Wang L."/>
            <person name="Ye M."/>
            <person name="Zou H."/>
        </authorList>
    </citation>
    <scope>PHOSPHORYLATION [LARGE SCALE ANALYSIS] AT SER-383; SER-387 AND SER-408</scope>
    <scope>IDENTIFICATION BY MASS SPECTROMETRY [LARGE SCALE ANALYSIS]</scope>
    <source>
        <tissue>Liver</tissue>
    </source>
</reference>
<reference key="11">
    <citation type="journal article" date="2018" name="Elife">
        <title>iTAP, a novel iRhom interactor, controls TNF secretion by policing the stability of iRhom/TACE.</title>
        <authorList>
            <person name="Oikonomidi I."/>
            <person name="Burbridge E."/>
            <person name="Cavadas M."/>
            <person name="Sullivan G."/>
            <person name="Collis B."/>
            <person name="Naegele H."/>
            <person name="Clancy D."/>
            <person name="Brezinova J."/>
            <person name="Hu T."/>
            <person name="Bileck A."/>
            <person name="Gerner C."/>
            <person name="Bolado A."/>
            <person name="von Kriegsheim A."/>
            <person name="Martin S.J."/>
            <person name="Steinberg F."/>
            <person name="Strisovsky K."/>
            <person name="Adrain C."/>
        </authorList>
    </citation>
    <scope>FUNCTION</scope>
    <scope>INTERACTION WITH RHBDF1 AND RHBDF2</scope>
    <scope>SUBCELLULAR LOCATION</scope>
</reference>
<reference key="12">
    <citation type="journal article" date="2018" name="Elife">
        <title>FRMD8 promotes inflammatory and growth factor signalling by stabilising the iRhom/ADAM17 sheddase complex.</title>
        <authorList>
            <person name="Kuenzel U."/>
            <person name="Grieve A.G."/>
            <person name="Meng Y."/>
            <person name="Sieber B."/>
            <person name="Cowley S.A."/>
            <person name="Freeman M."/>
        </authorList>
    </citation>
    <scope>FUNCTION</scope>
    <scope>INTERACTION WITH ADAM17; RHBDF1 AND RHBDF2</scope>
</reference>
<organism>
    <name type="scientific">Homo sapiens</name>
    <name type="common">Human</name>
    <dbReference type="NCBI Taxonomy" id="9606"/>
    <lineage>
        <taxon>Eukaryota</taxon>
        <taxon>Metazoa</taxon>
        <taxon>Chordata</taxon>
        <taxon>Craniata</taxon>
        <taxon>Vertebrata</taxon>
        <taxon>Euteleostomi</taxon>
        <taxon>Mammalia</taxon>
        <taxon>Eutheria</taxon>
        <taxon>Euarchontoglires</taxon>
        <taxon>Primates</taxon>
        <taxon>Haplorrhini</taxon>
        <taxon>Catarrhini</taxon>
        <taxon>Hominidae</taxon>
        <taxon>Homo</taxon>
    </lineage>
</organism>
<feature type="chain" id="PRO_0000295778" description="FERM domain-containing protein 8">
    <location>
        <begin position="1"/>
        <end position="464"/>
    </location>
</feature>
<feature type="domain" description="FERM" evidence="3">
    <location>
        <begin position="30"/>
        <end position="376"/>
    </location>
</feature>
<feature type="region of interest" description="Disordered" evidence="4">
    <location>
        <begin position="1"/>
        <end position="22"/>
    </location>
</feature>
<feature type="region of interest" description="Disordered" evidence="4">
    <location>
        <begin position="376"/>
        <end position="408"/>
    </location>
</feature>
<feature type="modified residue" description="N-acetylmethionine" evidence="14">
    <location>
        <position position="1"/>
    </location>
</feature>
<feature type="modified residue" description="Phosphoserine" evidence="2">
    <location>
        <position position="24"/>
    </location>
</feature>
<feature type="modified residue" description="Phosphoserine" evidence="16">
    <location>
        <position position="383"/>
    </location>
</feature>
<feature type="modified residue" description="Phosphoserine" evidence="16">
    <location>
        <position position="387"/>
    </location>
</feature>
<feature type="modified residue" description="Phosphoserine" evidence="16">
    <location>
        <position position="408"/>
    </location>
</feature>
<feature type="modified residue" description="Phosphothreonine" evidence="1">
    <location>
        <position position="419"/>
    </location>
</feature>
<feature type="modified residue" description="Phosphoserine" evidence="12 15">
    <location>
        <position position="439"/>
    </location>
</feature>
<feature type="modified residue" description="Phosphoserine" evidence="13 15">
    <location>
        <position position="446"/>
    </location>
</feature>
<feature type="splice variant" id="VSP_027085" description="In isoform 2." evidence="8">
    <location>
        <begin position="29"/>
        <end position="84"/>
    </location>
</feature>
<feature type="splice variant" id="VSP_056059" description="In isoform 3." evidence="8">
    <location>
        <begin position="85"/>
        <end position="118"/>
    </location>
</feature>
<feature type="sequence conflict" description="In Ref. 4; AAH51695." evidence="11" ref="4">
    <original>D</original>
    <variation>N</variation>
    <location>
        <position position="198"/>
    </location>
</feature>
<proteinExistence type="evidence at protein level"/>
<protein>
    <recommendedName>
        <fullName>FERM domain-containing protein 8</fullName>
    </recommendedName>
    <alternativeName>
        <fullName evidence="9">Band4.1 inhibitor LRP interactor</fullName>
        <shortName evidence="9">Bili</shortName>
    </alternativeName>
    <alternativeName>
        <fullName evidence="10">iRhom tail-associated protein</fullName>
        <shortName evidence="10">iTAP</shortName>
    </alternativeName>
</protein>
<accession>Q9BZ67</accession>
<accession>B4E2P1</accession>
<accession>Q86V56</accession>
<accession>Q8NCB5</accession>
<keyword id="KW-0007">Acetylation</keyword>
<keyword id="KW-0025">Alternative splicing</keyword>
<keyword id="KW-1003">Cell membrane</keyword>
<keyword id="KW-0963">Cytoplasm</keyword>
<keyword id="KW-0472">Membrane</keyword>
<keyword id="KW-0597">Phosphoprotein</keyword>
<keyword id="KW-1267">Proteomics identification</keyword>
<keyword id="KW-1185">Reference proteome</keyword>
<sequence>MDGTEGSAGQPGPAERSHRSSVSSVGARAADVLVYLADDTVVPLAVENLPSLSAHELHRAVREVLQLPDIALDVFALWLVSPLLEVQLKPKHQPYKLGRQWPELLLRFTSAPDDDVAMDEPFLQFRRNVFFPKRRELQIHDEEVLRLLYEEAKGNVLAARYPCDVEDCEALGALVCRVQLGPYQPGRPAACDLREKLDSFLPAHLCKRGQSLFAALRGRGARAGPGEQGLLNAYRQVQEVSSDGGCEAALGTHYRAYLLKCHELPFYGCAFFHGEVDKPAQGFLHRGGRKPVSVAISLEGVHVIDSREKHVLLGLRFQELSWDHTSPEEEEPILWLEFDGDSEGTPVNKLLKIYSKQAELMSSLIEYCIELSQAAEPAGPQDSATGSPSDPSSSLAPVQRPKLRRQGSVVSSRIQHLSTIDYVEDGKGIRRVKPKRTTSFFSRQLSLGQGSYTVVQPGDSLEQG</sequence>
<evidence type="ECO:0000250" key="1">
    <source>
        <dbReference type="UniProtKB" id="Q3UFK8"/>
    </source>
</evidence>
<evidence type="ECO:0000250" key="2">
    <source>
        <dbReference type="UniProtKB" id="Q5U2R3"/>
    </source>
</evidence>
<evidence type="ECO:0000255" key="3">
    <source>
        <dbReference type="PROSITE-ProRule" id="PRU00084"/>
    </source>
</evidence>
<evidence type="ECO:0000256" key="4">
    <source>
        <dbReference type="SAM" id="MobiDB-lite"/>
    </source>
</evidence>
<evidence type="ECO:0000269" key="5">
    <source>
    </source>
</evidence>
<evidence type="ECO:0000269" key="6">
    <source>
    </source>
</evidence>
<evidence type="ECO:0000269" key="7">
    <source>
    </source>
</evidence>
<evidence type="ECO:0000303" key="8">
    <source>
    </source>
</evidence>
<evidence type="ECO:0000303" key="9">
    <source>
    </source>
</evidence>
<evidence type="ECO:0000303" key="10">
    <source>
    </source>
</evidence>
<evidence type="ECO:0000305" key="11"/>
<evidence type="ECO:0007744" key="12">
    <source>
    </source>
</evidence>
<evidence type="ECO:0007744" key="13">
    <source>
    </source>
</evidence>
<evidence type="ECO:0007744" key="14">
    <source>
    </source>
</evidence>
<evidence type="ECO:0007744" key="15">
    <source>
    </source>
</evidence>
<evidence type="ECO:0007744" key="16">
    <source>
    </source>
</evidence>
<gene>
    <name type="primary">FRMD8</name>
    <name type="ORF">FKSG44</name>
</gene>
<dbReference type="EMBL" id="AF334946">
    <property type="protein sequence ID" value="AAG50295.1"/>
    <property type="molecule type" value="mRNA"/>
</dbReference>
<dbReference type="EMBL" id="AK074850">
    <property type="protein sequence ID" value="BAC11244.1"/>
    <property type="molecule type" value="mRNA"/>
</dbReference>
<dbReference type="EMBL" id="AK304363">
    <property type="protein sequence ID" value="BAG65203.1"/>
    <property type="molecule type" value="mRNA"/>
</dbReference>
<dbReference type="EMBL" id="AP000944">
    <property type="status" value="NOT_ANNOTATED_CDS"/>
    <property type="molecule type" value="Genomic_DNA"/>
</dbReference>
<dbReference type="EMBL" id="BC044658">
    <property type="protein sequence ID" value="AAH44658.1"/>
    <property type="molecule type" value="mRNA"/>
</dbReference>
<dbReference type="EMBL" id="BC051695">
    <property type="protein sequence ID" value="AAH51695.1"/>
    <property type="molecule type" value="mRNA"/>
</dbReference>
<dbReference type="CCDS" id="CCDS73320.1">
    <molecule id="Q9BZ67-3"/>
</dbReference>
<dbReference type="CCDS" id="CCDS76432.1">
    <molecule id="Q9BZ67-2"/>
</dbReference>
<dbReference type="CCDS" id="CCDS8102.1">
    <molecule id="Q9BZ67-1"/>
</dbReference>
<dbReference type="RefSeq" id="NP_001287761.1">
    <molecule id="Q9BZ67-2"/>
    <property type="nucleotide sequence ID" value="NM_001300832.3"/>
</dbReference>
<dbReference type="RefSeq" id="NP_001287762.1">
    <molecule id="Q9BZ67-3"/>
    <property type="nucleotide sequence ID" value="NM_001300833.3"/>
</dbReference>
<dbReference type="RefSeq" id="NP_114110.1">
    <molecule id="Q9BZ67-1"/>
    <property type="nucleotide sequence ID" value="NM_031904.5"/>
</dbReference>
<dbReference type="SMR" id="Q9BZ67"/>
<dbReference type="BioGRID" id="123761">
    <property type="interactions" value="19"/>
</dbReference>
<dbReference type="FunCoup" id="Q9BZ67">
    <property type="interactions" value="1528"/>
</dbReference>
<dbReference type="IntAct" id="Q9BZ67">
    <property type="interactions" value="12"/>
</dbReference>
<dbReference type="MINT" id="Q9BZ67"/>
<dbReference type="STRING" id="9606.ENSP00000319726"/>
<dbReference type="iPTMnet" id="Q9BZ67"/>
<dbReference type="PhosphoSitePlus" id="Q9BZ67"/>
<dbReference type="BioMuta" id="FRMD8"/>
<dbReference type="DMDM" id="74733481"/>
<dbReference type="jPOST" id="Q9BZ67"/>
<dbReference type="MassIVE" id="Q9BZ67"/>
<dbReference type="PaxDb" id="9606-ENSP00000319726"/>
<dbReference type="PeptideAtlas" id="Q9BZ67"/>
<dbReference type="ProteomicsDB" id="5840"/>
<dbReference type="ProteomicsDB" id="79768">
    <molecule id="Q9BZ67-1"/>
</dbReference>
<dbReference type="ProteomicsDB" id="79769">
    <molecule id="Q9BZ67-2"/>
</dbReference>
<dbReference type="Pumba" id="Q9BZ67"/>
<dbReference type="Antibodypedia" id="1109">
    <property type="antibodies" value="122 antibodies from 18 providers"/>
</dbReference>
<dbReference type="DNASU" id="83786"/>
<dbReference type="Ensembl" id="ENST00000317568.10">
    <molecule id="Q9BZ67-1"/>
    <property type="protein sequence ID" value="ENSP00000319726.4"/>
    <property type="gene ID" value="ENSG00000126391.14"/>
</dbReference>
<dbReference type="Ensembl" id="ENST00000355991.9">
    <molecule id="Q9BZ67-2"/>
    <property type="protein sequence ID" value="ENSP00000348270.5"/>
    <property type="gene ID" value="ENSG00000126391.14"/>
</dbReference>
<dbReference type="Ensembl" id="ENST00000416776.6">
    <molecule id="Q9BZ67-3"/>
    <property type="protein sequence ID" value="ENSP00000392111.2"/>
    <property type="gene ID" value="ENSG00000126391.14"/>
</dbReference>
<dbReference type="GeneID" id="83786"/>
<dbReference type="KEGG" id="hsa:83786"/>
<dbReference type="MANE-Select" id="ENST00000317568.10">
    <property type="protein sequence ID" value="ENSP00000319726.4"/>
    <property type="RefSeq nucleotide sequence ID" value="NM_031904.5"/>
    <property type="RefSeq protein sequence ID" value="NP_114110.1"/>
</dbReference>
<dbReference type="UCSC" id="uc001odu.5">
    <molecule id="Q9BZ67-1"/>
    <property type="organism name" value="human"/>
</dbReference>
<dbReference type="AGR" id="HGNC:25462"/>
<dbReference type="CTD" id="83786"/>
<dbReference type="DisGeNET" id="83786"/>
<dbReference type="GeneCards" id="FRMD8"/>
<dbReference type="HGNC" id="HGNC:25462">
    <property type="gene designation" value="FRMD8"/>
</dbReference>
<dbReference type="HPA" id="ENSG00000126391">
    <property type="expression patterns" value="Low tissue specificity"/>
</dbReference>
<dbReference type="MIM" id="618337">
    <property type="type" value="gene"/>
</dbReference>
<dbReference type="neXtProt" id="NX_Q9BZ67"/>
<dbReference type="OpenTargets" id="ENSG00000126391"/>
<dbReference type="PharmGKB" id="PA162388963"/>
<dbReference type="VEuPathDB" id="HostDB:ENSG00000126391"/>
<dbReference type="eggNOG" id="KOG4335">
    <property type="taxonomic scope" value="Eukaryota"/>
</dbReference>
<dbReference type="GeneTree" id="ENSGT00530000063721"/>
<dbReference type="HOGENOM" id="CLU_032351_0_0_1"/>
<dbReference type="InParanoid" id="Q9BZ67"/>
<dbReference type="OMA" id="GCAFFYG"/>
<dbReference type="OrthoDB" id="2142533at2759"/>
<dbReference type="PAN-GO" id="Q9BZ67">
    <property type="GO annotations" value="2 GO annotations based on evolutionary models"/>
</dbReference>
<dbReference type="PhylomeDB" id="Q9BZ67"/>
<dbReference type="TreeFam" id="TF317921"/>
<dbReference type="PathwayCommons" id="Q9BZ67"/>
<dbReference type="SignaLink" id="Q9BZ67"/>
<dbReference type="BioGRID-ORCS" id="83786">
    <property type="hits" value="13 hits in 1158 CRISPR screens"/>
</dbReference>
<dbReference type="CD-CODE" id="804901D1">
    <property type="entry name" value="Nuclear speckle"/>
</dbReference>
<dbReference type="ChiTaRS" id="FRMD8">
    <property type="organism name" value="human"/>
</dbReference>
<dbReference type="GenomeRNAi" id="83786"/>
<dbReference type="Pharos" id="Q9BZ67">
    <property type="development level" value="Tdark"/>
</dbReference>
<dbReference type="PRO" id="PR:Q9BZ67"/>
<dbReference type="Proteomes" id="UP000005640">
    <property type="component" value="Chromosome 11"/>
</dbReference>
<dbReference type="RNAct" id="Q9BZ67">
    <property type="molecule type" value="protein"/>
</dbReference>
<dbReference type="Bgee" id="ENSG00000126391">
    <property type="expression patterns" value="Expressed in pancreatic ductal cell and 170 other cell types or tissues"/>
</dbReference>
<dbReference type="ExpressionAtlas" id="Q9BZ67">
    <property type="expression patterns" value="baseline and differential"/>
</dbReference>
<dbReference type="GO" id="GO:0034451">
    <property type="term" value="C:centriolar satellite"/>
    <property type="evidence" value="ECO:0000314"/>
    <property type="project" value="HPA"/>
</dbReference>
<dbReference type="GO" id="GO:0005829">
    <property type="term" value="C:cytosol"/>
    <property type="evidence" value="ECO:0000314"/>
    <property type="project" value="HPA"/>
</dbReference>
<dbReference type="GO" id="GO:0005654">
    <property type="term" value="C:nucleoplasm"/>
    <property type="evidence" value="ECO:0000314"/>
    <property type="project" value="HPA"/>
</dbReference>
<dbReference type="GO" id="GO:0005886">
    <property type="term" value="C:plasma membrane"/>
    <property type="evidence" value="ECO:0000314"/>
    <property type="project" value="HPA"/>
</dbReference>
<dbReference type="GO" id="GO:0090090">
    <property type="term" value="P:negative regulation of canonical Wnt signaling pathway"/>
    <property type="evidence" value="ECO:0000318"/>
    <property type="project" value="GO_Central"/>
</dbReference>
<dbReference type="GO" id="GO:0032760">
    <property type="term" value="P:positive regulation of tumor necrosis factor production"/>
    <property type="evidence" value="ECO:0000314"/>
    <property type="project" value="UniProtKB"/>
</dbReference>
<dbReference type="GO" id="GO:0072659">
    <property type="term" value="P:protein localization to plasma membrane"/>
    <property type="evidence" value="ECO:0007669"/>
    <property type="project" value="Ensembl"/>
</dbReference>
<dbReference type="CDD" id="cd14473">
    <property type="entry name" value="FERM_B-lobe"/>
    <property type="match status" value="1"/>
</dbReference>
<dbReference type="FunFam" id="1.20.80.10:FF:000023">
    <property type="entry name" value="FERM domain containing 8"/>
    <property type="match status" value="1"/>
</dbReference>
<dbReference type="FunFam" id="2.30.29.30:FF:000216">
    <property type="entry name" value="FERM domain-containing protein 8"/>
    <property type="match status" value="1"/>
</dbReference>
<dbReference type="FunFam" id="3.10.20.90:FF:000191">
    <property type="entry name" value="FERM domain-containing protein 8"/>
    <property type="match status" value="1"/>
</dbReference>
<dbReference type="Gene3D" id="1.20.80.10">
    <property type="match status" value="1"/>
</dbReference>
<dbReference type="Gene3D" id="3.10.20.90">
    <property type="entry name" value="Phosphatidylinositol 3-kinase Catalytic Subunit, Chain A, domain 1"/>
    <property type="match status" value="1"/>
</dbReference>
<dbReference type="Gene3D" id="2.30.29.30">
    <property type="entry name" value="Pleckstrin-homology domain (PH domain)/Phosphotyrosine-binding domain (PTB)"/>
    <property type="match status" value="1"/>
</dbReference>
<dbReference type="InterPro" id="IPR019749">
    <property type="entry name" value="Band_41_domain"/>
</dbReference>
<dbReference type="InterPro" id="IPR014352">
    <property type="entry name" value="FERM/acyl-CoA-bd_prot_sf"/>
</dbReference>
<dbReference type="InterPro" id="IPR035963">
    <property type="entry name" value="FERM_2"/>
</dbReference>
<dbReference type="InterPro" id="IPR019748">
    <property type="entry name" value="FERM_central"/>
</dbReference>
<dbReference type="InterPro" id="IPR000299">
    <property type="entry name" value="FERM_domain"/>
</dbReference>
<dbReference type="InterPro" id="IPR051594">
    <property type="entry name" value="KRIT1/FRMD8"/>
</dbReference>
<dbReference type="InterPro" id="IPR011993">
    <property type="entry name" value="PH-like_dom_sf"/>
</dbReference>
<dbReference type="PANTHER" id="PTHR13283:SF13">
    <property type="entry name" value="FERM DOMAIN-CONTAINING PROTEIN 8"/>
    <property type="match status" value="1"/>
</dbReference>
<dbReference type="PANTHER" id="PTHR13283">
    <property type="entry name" value="KREV INTERACTION TRAPPED 1-RELATED"/>
    <property type="match status" value="1"/>
</dbReference>
<dbReference type="Pfam" id="PF00373">
    <property type="entry name" value="FERM_M"/>
    <property type="match status" value="1"/>
</dbReference>
<dbReference type="Pfam" id="PF24522">
    <property type="entry name" value="KRIT1_FRMD8_FERM_C"/>
    <property type="match status" value="1"/>
</dbReference>
<dbReference type="SMART" id="SM00295">
    <property type="entry name" value="B41"/>
    <property type="match status" value="1"/>
</dbReference>
<dbReference type="SUPFAM" id="SSF47031">
    <property type="entry name" value="Second domain of FERM"/>
    <property type="match status" value="1"/>
</dbReference>
<dbReference type="PROSITE" id="PS50057">
    <property type="entry name" value="FERM_3"/>
    <property type="match status" value="1"/>
</dbReference>
<name>FRMD8_HUMAN</name>
<comment type="function">
    <text evidence="5 6 7">Promotes the cell surface stability of iRhom1/RHBDF1 and iRhom2/RHBDF2 and prevents their degradation via the endolysosomal pathway. By acting on iRhoms, involved in ADAM17-mediated shedding of TNF, amphiregulin/AREG, HBEGF and TGFA from the cell surface (PubMed:29897333, PubMed:29897336). Negatively regulates Wnt signaling, possibly by antagonizing the recruitment of AXIN1 to LRP6 (PubMed:19572019).</text>
</comment>
<comment type="subunit">
    <text evidence="5 6 7">Interacts with iRhom1/RHBDF1 and iRhom2/RHBDF2 (via cytoplasmic N-termini); this interaction leads to mutual protein stabilization (PubMed:29897333). Interacts with ADAM17; this interaction is indirect and mediated by iRhom proteins (PubMed:29897333, PubMed:29897336). Interacts with LRP6; this interaction affects LRP6-binding to AXIN1 (PubMed:19572019).</text>
</comment>
<comment type="interaction">
    <interactant intactId="EBI-5773072">
        <id>Q9BZ67</id>
    </interactant>
    <interactant intactId="EBI-743099">
        <id>Q969F0</id>
        <label>FATE1</label>
    </interactant>
    <organismsDiffer>false</organismsDiffer>
    <experiments>3</experiments>
</comment>
<comment type="interaction">
    <interactant intactId="EBI-5773072">
        <id>Q9BZ67</id>
    </interactant>
    <interactant intactId="EBI-2832937">
        <id>Q96HH9</id>
        <label>GRAMD2B</label>
    </interactant>
    <organismsDiffer>false</organismsDiffer>
    <experiments>6</experiments>
</comment>
<comment type="interaction">
    <interactant intactId="EBI-5773072">
        <id>Q9BZ67</id>
    </interactant>
    <interactant intactId="EBI-12966028">
        <id>Q12809-2</id>
        <label>KCNH2</label>
    </interactant>
    <organismsDiffer>false</organismsDiffer>
    <experiments>3</experiments>
</comment>
<comment type="interaction">
    <interactant intactId="EBI-5773072">
        <id>Q9BZ67</id>
    </interactant>
    <interactant intactId="EBI-2830566">
        <id>Q9H400</id>
        <label>LIME1</label>
    </interactant>
    <organismsDiffer>false</organismsDiffer>
    <experiments>3</experiments>
</comment>
<comment type="interaction">
    <interactant intactId="EBI-5773072">
        <id>Q9BZ67</id>
    </interactant>
    <interactant intactId="EBI-742388">
        <id>Q9H8W4</id>
        <label>PLEKHF2</label>
    </interactant>
    <organismsDiffer>false</organismsDiffer>
    <experiments>8</experiments>
</comment>
<comment type="interaction">
    <interactant intactId="EBI-5773072">
        <id>Q9BZ67</id>
    </interactant>
    <interactant intactId="EBI-740232">
        <id>Q9NWS9-2</id>
        <label>ZNF446</label>
    </interactant>
    <organismsDiffer>false</organismsDiffer>
    <experiments>3</experiments>
</comment>
<comment type="interaction">
    <interactant intactId="EBI-5773072">
        <id>Q9BZ67</id>
    </interactant>
    <interactant intactId="EBI-17269964">
        <id>Q6S9Z5</id>
        <label>ZNF474</label>
    </interactant>
    <organismsDiffer>false</organismsDiffer>
    <experiments>3</experiments>
</comment>
<comment type="subcellular location">
    <subcellularLocation>
        <location evidence="5 6">Cytoplasm</location>
        <location evidence="5 6">Cytosol</location>
    </subcellularLocation>
    <subcellularLocation>
        <location evidence="5 6">Cell membrane</location>
    </subcellularLocation>
</comment>
<comment type="alternative products">
    <event type="alternative splicing"/>
    <isoform>
        <id>Q9BZ67-1</id>
        <name>1</name>
        <sequence type="displayed"/>
    </isoform>
    <isoform>
        <id>Q9BZ67-2</id>
        <name>2</name>
        <sequence type="described" ref="VSP_027085"/>
    </isoform>
    <isoform>
        <id>Q9BZ67-3</id>
        <name>3</name>
        <sequence type="described" ref="VSP_056059"/>
    </isoform>
</comment>
<comment type="tissue specificity">
    <text evidence="5">Widely expressed, with high expression in heart and spleen.</text>
</comment>